<proteinExistence type="evidence at transcript level"/>
<sequence>MRALLGICVLALVTPAVLGRTMDRCSLAREMANMGVSRDQLSKWACIAEHESSYRTGVVGPPNTDGSNDYGIFQINDMYWCQPSSGKFSHNGCDVSCNALLTDDIKSSVRCALKVLGQQGWSAWSTWHYCSGYLPPIDDCFV</sequence>
<organism>
    <name type="scientific">Drosophila melanogaster</name>
    <name type="common">Fruit fly</name>
    <dbReference type="NCBI Taxonomy" id="7227"/>
    <lineage>
        <taxon>Eukaryota</taxon>
        <taxon>Metazoa</taxon>
        <taxon>Ecdysozoa</taxon>
        <taxon>Arthropoda</taxon>
        <taxon>Hexapoda</taxon>
        <taxon>Insecta</taxon>
        <taxon>Pterygota</taxon>
        <taxon>Neoptera</taxon>
        <taxon>Endopterygota</taxon>
        <taxon>Diptera</taxon>
        <taxon>Brachycera</taxon>
        <taxon>Muscomorpha</taxon>
        <taxon>Ephydroidea</taxon>
        <taxon>Drosophilidae</taxon>
        <taxon>Drosophila</taxon>
        <taxon>Sophophora</taxon>
    </lineage>
</organism>
<protein>
    <recommendedName>
        <fullName>Lysozyme X</fullName>
        <ecNumber>3.2.1.17</ecNumber>
    </recommendedName>
    <alternativeName>
        <fullName>1,4-beta-N-acetylmuramidase X</fullName>
    </alternativeName>
</protein>
<comment type="function">
    <text>Unlikely to play an active role in the humoral immune defense. May have a function in the digestion of bacteria in the food. May be involved in the clearance of bacteria from the larval gut before metamorphosis.</text>
</comment>
<comment type="catalytic activity">
    <reaction>
        <text>Hydrolysis of (1-&gt;4)-beta-linkages between N-acetylmuramic acid and N-acetyl-D-glucosamine residues in a peptidoglycan and between N-acetyl-D-glucosamine residues in chitodextrins.</text>
        <dbReference type="EC" id="3.2.1.17"/>
    </reaction>
</comment>
<comment type="tissue specificity">
    <text>Found in the midgut.</text>
</comment>
<comment type="developmental stage">
    <text>Rises dramatically in the late third instar, then decreases gradually during the pupal stages. Low expression is found in adults.</text>
</comment>
<comment type="similarity">
    <text evidence="2">Belongs to the glycosyl hydrolase 22 family.</text>
</comment>
<evidence type="ECO:0000255" key="1"/>
<evidence type="ECO:0000255" key="2">
    <source>
        <dbReference type="PROSITE-ProRule" id="PRU00680"/>
    </source>
</evidence>
<evidence type="ECO:0000269" key="3">
    <source>
    </source>
</evidence>
<reference key="1">
    <citation type="journal article" date="2007" name="J. Evol. Biol.">
        <title>A screen for immunity genes evolving under positive selection in Drosophila.</title>
        <authorList>
            <person name="Jiggins F.M."/>
            <person name="Kim K.W."/>
        </authorList>
    </citation>
    <scope>NUCLEOTIDE SEQUENCE [GENOMIC DNA]</scope>
    <scope>VARIANTS THR-6; LEU-78 AND GLY-94</scope>
    <source>
        <strain>G02</strain>
        <strain>G130</strain>
        <strain>G140</strain>
        <strain>G28</strain>
    </source>
</reference>
<reference key="2">
    <citation type="journal article" date="2000" name="Science">
        <title>The genome sequence of Drosophila melanogaster.</title>
        <authorList>
            <person name="Adams M.D."/>
            <person name="Celniker S.E."/>
            <person name="Holt R.A."/>
            <person name="Evans C.A."/>
            <person name="Gocayne J.D."/>
            <person name="Amanatides P.G."/>
            <person name="Scherer S.E."/>
            <person name="Li P.W."/>
            <person name="Hoskins R.A."/>
            <person name="Galle R.F."/>
            <person name="George R.A."/>
            <person name="Lewis S.E."/>
            <person name="Richards S."/>
            <person name="Ashburner M."/>
            <person name="Henderson S.N."/>
            <person name="Sutton G.G."/>
            <person name="Wortman J.R."/>
            <person name="Yandell M.D."/>
            <person name="Zhang Q."/>
            <person name="Chen L.X."/>
            <person name="Brandon R.C."/>
            <person name="Rogers Y.-H.C."/>
            <person name="Blazej R.G."/>
            <person name="Champe M."/>
            <person name="Pfeiffer B.D."/>
            <person name="Wan K.H."/>
            <person name="Doyle C."/>
            <person name="Baxter E.G."/>
            <person name="Helt G."/>
            <person name="Nelson C.R."/>
            <person name="Miklos G.L.G."/>
            <person name="Abril J.F."/>
            <person name="Agbayani A."/>
            <person name="An H.-J."/>
            <person name="Andrews-Pfannkoch C."/>
            <person name="Baldwin D."/>
            <person name="Ballew R.M."/>
            <person name="Basu A."/>
            <person name="Baxendale J."/>
            <person name="Bayraktaroglu L."/>
            <person name="Beasley E.M."/>
            <person name="Beeson K.Y."/>
            <person name="Benos P.V."/>
            <person name="Berman B.P."/>
            <person name="Bhandari D."/>
            <person name="Bolshakov S."/>
            <person name="Borkova D."/>
            <person name="Botchan M.R."/>
            <person name="Bouck J."/>
            <person name="Brokstein P."/>
            <person name="Brottier P."/>
            <person name="Burtis K.C."/>
            <person name="Busam D.A."/>
            <person name="Butler H."/>
            <person name="Cadieu E."/>
            <person name="Center A."/>
            <person name="Chandra I."/>
            <person name="Cherry J.M."/>
            <person name="Cawley S."/>
            <person name="Dahlke C."/>
            <person name="Davenport L.B."/>
            <person name="Davies P."/>
            <person name="de Pablos B."/>
            <person name="Delcher A."/>
            <person name="Deng Z."/>
            <person name="Mays A.D."/>
            <person name="Dew I."/>
            <person name="Dietz S.M."/>
            <person name="Dodson K."/>
            <person name="Doup L.E."/>
            <person name="Downes M."/>
            <person name="Dugan-Rocha S."/>
            <person name="Dunkov B.C."/>
            <person name="Dunn P."/>
            <person name="Durbin K.J."/>
            <person name="Evangelista C.C."/>
            <person name="Ferraz C."/>
            <person name="Ferriera S."/>
            <person name="Fleischmann W."/>
            <person name="Fosler C."/>
            <person name="Gabrielian A.E."/>
            <person name="Garg N.S."/>
            <person name="Gelbart W.M."/>
            <person name="Glasser K."/>
            <person name="Glodek A."/>
            <person name="Gong F."/>
            <person name="Gorrell J.H."/>
            <person name="Gu Z."/>
            <person name="Guan P."/>
            <person name="Harris M."/>
            <person name="Harris N.L."/>
            <person name="Harvey D.A."/>
            <person name="Heiman T.J."/>
            <person name="Hernandez J.R."/>
            <person name="Houck J."/>
            <person name="Hostin D."/>
            <person name="Houston K.A."/>
            <person name="Howland T.J."/>
            <person name="Wei M.-H."/>
            <person name="Ibegwam C."/>
            <person name="Jalali M."/>
            <person name="Kalush F."/>
            <person name="Karpen G.H."/>
            <person name="Ke Z."/>
            <person name="Kennison J.A."/>
            <person name="Ketchum K.A."/>
            <person name="Kimmel B.E."/>
            <person name="Kodira C.D."/>
            <person name="Kraft C.L."/>
            <person name="Kravitz S."/>
            <person name="Kulp D."/>
            <person name="Lai Z."/>
            <person name="Lasko P."/>
            <person name="Lei Y."/>
            <person name="Levitsky A.A."/>
            <person name="Li J.H."/>
            <person name="Li Z."/>
            <person name="Liang Y."/>
            <person name="Lin X."/>
            <person name="Liu X."/>
            <person name="Mattei B."/>
            <person name="McIntosh T.C."/>
            <person name="McLeod M.P."/>
            <person name="McPherson D."/>
            <person name="Merkulov G."/>
            <person name="Milshina N.V."/>
            <person name="Mobarry C."/>
            <person name="Morris J."/>
            <person name="Moshrefi A."/>
            <person name="Mount S.M."/>
            <person name="Moy M."/>
            <person name="Murphy B."/>
            <person name="Murphy L."/>
            <person name="Muzny D.M."/>
            <person name="Nelson D.L."/>
            <person name="Nelson D.R."/>
            <person name="Nelson K.A."/>
            <person name="Nixon K."/>
            <person name="Nusskern D.R."/>
            <person name="Pacleb J.M."/>
            <person name="Palazzolo M."/>
            <person name="Pittman G.S."/>
            <person name="Pan S."/>
            <person name="Pollard J."/>
            <person name="Puri V."/>
            <person name="Reese M.G."/>
            <person name="Reinert K."/>
            <person name="Remington K."/>
            <person name="Saunders R.D.C."/>
            <person name="Scheeler F."/>
            <person name="Shen H."/>
            <person name="Shue B.C."/>
            <person name="Siden-Kiamos I."/>
            <person name="Simpson M."/>
            <person name="Skupski M.P."/>
            <person name="Smith T.J."/>
            <person name="Spier E."/>
            <person name="Spradling A.C."/>
            <person name="Stapleton M."/>
            <person name="Strong R."/>
            <person name="Sun E."/>
            <person name="Svirskas R."/>
            <person name="Tector C."/>
            <person name="Turner R."/>
            <person name="Venter E."/>
            <person name="Wang A.H."/>
            <person name="Wang X."/>
            <person name="Wang Z.-Y."/>
            <person name="Wassarman D.A."/>
            <person name="Weinstock G.M."/>
            <person name="Weissenbach J."/>
            <person name="Williams S.M."/>
            <person name="Woodage T."/>
            <person name="Worley K.C."/>
            <person name="Wu D."/>
            <person name="Yang S."/>
            <person name="Yao Q.A."/>
            <person name="Ye J."/>
            <person name="Yeh R.-F."/>
            <person name="Zaveri J.S."/>
            <person name="Zhan M."/>
            <person name="Zhang G."/>
            <person name="Zhao Q."/>
            <person name="Zheng L."/>
            <person name="Zheng X.H."/>
            <person name="Zhong F.N."/>
            <person name="Zhong W."/>
            <person name="Zhou X."/>
            <person name="Zhu S.C."/>
            <person name="Zhu X."/>
            <person name="Smith H.O."/>
            <person name="Gibbs R.A."/>
            <person name="Myers E.W."/>
            <person name="Rubin G.M."/>
            <person name="Venter J.C."/>
        </authorList>
    </citation>
    <scope>NUCLEOTIDE SEQUENCE [LARGE SCALE GENOMIC DNA]</scope>
    <source>
        <strain>Berkeley</strain>
    </source>
</reference>
<reference key="3">
    <citation type="journal article" date="2002" name="Genome Biol.">
        <title>Annotation of the Drosophila melanogaster euchromatic genome: a systematic review.</title>
        <authorList>
            <person name="Misra S."/>
            <person name="Crosby M.A."/>
            <person name="Mungall C.J."/>
            <person name="Matthews B.B."/>
            <person name="Campbell K.S."/>
            <person name="Hradecky P."/>
            <person name="Huang Y."/>
            <person name="Kaminker J.S."/>
            <person name="Millburn G.H."/>
            <person name="Prochnik S.E."/>
            <person name="Smith C.D."/>
            <person name="Tupy J.L."/>
            <person name="Whitfield E.J."/>
            <person name="Bayraktaroglu L."/>
            <person name="Berman B.P."/>
            <person name="Bettencourt B.R."/>
            <person name="Celniker S.E."/>
            <person name="de Grey A.D.N.J."/>
            <person name="Drysdale R.A."/>
            <person name="Harris N.L."/>
            <person name="Richter J."/>
            <person name="Russo S."/>
            <person name="Schroeder A.J."/>
            <person name="Shu S.Q."/>
            <person name="Stapleton M."/>
            <person name="Yamada C."/>
            <person name="Ashburner M."/>
            <person name="Gelbart W.M."/>
            <person name="Rubin G.M."/>
            <person name="Lewis S.E."/>
        </authorList>
    </citation>
    <scope>GENOME REANNOTATION</scope>
    <source>
        <strain>Berkeley</strain>
    </source>
</reference>
<reference key="4">
    <citation type="journal article" date="2002" name="Genome Biol.">
        <title>A Drosophila full-length cDNA resource.</title>
        <authorList>
            <person name="Stapleton M."/>
            <person name="Carlson J.W."/>
            <person name="Brokstein P."/>
            <person name="Yu C."/>
            <person name="Champe M."/>
            <person name="George R.A."/>
            <person name="Guarin H."/>
            <person name="Kronmiller B."/>
            <person name="Pacleb J.M."/>
            <person name="Park S."/>
            <person name="Wan K.H."/>
            <person name="Rubin G.M."/>
            <person name="Celniker S.E."/>
        </authorList>
    </citation>
    <scope>NUCLEOTIDE SEQUENCE [LARGE SCALE MRNA]</scope>
    <source>
        <strain>Berkeley</strain>
        <tissue>Larva</tissue>
        <tissue>Pupae</tissue>
    </source>
</reference>
<reference key="5">
    <citation type="journal article" date="1994" name="Mol. Gen. Genet.">
        <title>The lysozyme locus in Drosophila melanogaster: an expanded gene family adapted for expression in the digestive tract.</title>
        <authorList>
            <person name="Daffre S."/>
            <person name="Kylsten P."/>
            <person name="Samakovlis C."/>
            <person name="Hultmark D."/>
        </authorList>
    </citation>
    <scope>NUCLEOTIDE SEQUENCE [MRNA] OF 62-142</scope>
    <source>
        <strain>Canton-S</strain>
    </source>
</reference>
<feature type="signal peptide" evidence="1">
    <location>
        <begin position="1"/>
        <end position="19"/>
    </location>
</feature>
<feature type="chain" id="PRO_0000018516" description="Lysozyme X">
    <location>
        <begin position="20"/>
        <end position="142"/>
    </location>
</feature>
<feature type="domain" description="C-type lysozyme" evidence="2">
    <location>
        <begin position="20"/>
        <end position="142"/>
    </location>
</feature>
<feature type="active site" evidence="2">
    <location>
        <position position="51"/>
    </location>
</feature>
<feature type="active site" evidence="2">
    <location>
        <position position="69"/>
    </location>
</feature>
<feature type="disulfide bond" evidence="2">
    <location>
        <begin position="25"/>
        <end position="140"/>
    </location>
</feature>
<feature type="disulfide bond" evidence="2">
    <location>
        <begin position="46"/>
        <end position="130"/>
    </location>
</feature>
<feature type="disulfide bond" evidence="2">
    <location>
        <begin position="81"/>
        <end position="97"/>
    </location>
</feature>
<feature type="disulfide bond" evidence="2">
    <location>
        <begin position="93"/>
        <end position="111"/>
    </location>
</feature>
<feature type="sequence variant" description="In strain: G140." evidence="3">
    <original>G</original>
    <variation>T</variation>
    <location>
        <position position="6"/>
    </location>
</feature>
<feature type="sequence variant" description="In strain: Canton-S, G02, G130 and G140." evidence="3">
    <original>M</original>
    <variation>L</variation>
    <location>
        <position position="78"/>
    </location>
</feature>
<feature type="sequence variant" description="In strain: G130 and G140." evidence="3">
    <original>D</original>
    <variation>G</variation>
    <location>
        <position position="94"/>
    </location>
</feature>
<keyword id="KW-0929">Antimicrobial</keyword>
<keyword id="KW-0081">Bacteriolytic enzyme</keyword>
<keyword id="KW-1015">Disulfide bond</keyword>
<keyword id="KW-0326">Glycosidase</keyword>
<keyword id="KW-0378">Hydrolase</keyword>
<keyword id="KW-1185">Reference proteome</keyword>
<keyword id="KW-0732">Signal</keyword>
<gene>
    <name type="primary">LysX</name>
    <name type="ORF">CG9120</name>
</gene>
<name>LYSX_DROME</name>
<dbReference type="EC" id="3.2.1.17"/>
<dbReference type="EMBL" id="AM412869">
    <property type="protein sequence ID" value="CAL85492.1"/>
    <property type="molecule type" value="Genomic_DNA"/>
</dbReference>
<dbReference type="EMBL" id="AM412870">
    <property type="protein sequence ID" value="CAL85493.1"/>
    <property type="molecule type" value="Genomic_DNA"/>
</dbReference>
<dbReference type="EMBL" id="AM412871">
    <property type="protein sequence ID" value="CAL85494.1"/>
    <property type="molecule type" value="Genomic_DNA"/>
</dbReference>
<dbReference type="EMBL" id="AM412872">
    <property type="protein sequence ID" value="CAL85495.1"/>
    <property type="molecule type" value="Genomic_DNA"/>
</dbReference>
<dbReference type="EMBL" id="AE014296">
    <property type="protein sequence ID" value="AAF47445.1"/>
    <property type="molecule type" value="Genomic_DNA"/>
</dbReference>
<dbReference type="EMBL" id="AY119081">
    <property type="protein sequence ID" value="AAM50941.1"/>
    <property type="molecule type" value="mRNA"/>
</dbReference>
<dbReference type="EMBL" id="Z22224">
    <property type="protein sequence ID" value="CAA80226.1"/>
    <property type="molecule type" value="mRNA"/>
</dbReference>
<dbReference type="PIR" id="S41580">
    <property type="entry name" value="S41580"/>
</dbReference>
<dbReference type="RefSeq" id="NP_523881.1">
    <property type="nucleotide sequence ID" value="NM_079157.2"/>
</dbReference>
<dbReference type="SMR" id="P37161"/>
<dbReference type="BioGRID" id="63669">
    <property type="interactions" value="1"/>
</dbReference>
<dbReference type="DIP" id="DIP-24095N"/>
<dbReference type="FunCoup" id="P37161">
    <property type="interactions" value="23"/>
</dbReference>
<dbReference type="STRING" id="7227.FBpp0072533"/>
<dbReference type="CAZy" id="GH22">
    <property type="family name" value="Glycoside Hydrolase Family 22"/>
</dbReference>
<dbReference type="PaxDb" id="7227-FBpp0072533"/>
<dbReference type="DNASU" id="38122"/>
<dbReference type="EnsemblMetazoa" id="FBtr0072637">
    <property type="protein sequence ID" value="FBpp0072533"/>
    <property type="gene ID" value="FBgn0004431"/>
</dbReference>
<dbReference type="GeneID" id="38122"/>
<dbReference type="KEGG" id="dme:Dmel_CG9120"/>
<dbReference type="AGR" id="FB:FBgn0004431"/>
<dbReference type="CTD" id="38122"/>
<dbReference type="FlyBase" id="FBgn0004431">
    <property type="gene designation" value="LysX"/>
</dbReference>
<dbReference type="VEuPathDB" id="VectorBase:FBgn0004431"/>
<dbReference type="eggNOG" id="ENOG502S1S1">
    <property type="taxonomic scope" value="Eukaryota"/>
</dbReference>
<dbReference type="GeneTree" id="ENSGT00940000166760"/>
<dbReference type="HOGENOM" id="CLU_111620_2_1_1"/>
<dbReference type="InParanoid" id="P37161"/>
<dbReference type="OMA" id="NNCQNRD"/>
<dbReference type="OrthoDB" id="17373at2759"/>
<dbReference type="PhylomeDB" id="P37161"/>
<dbReference type="Reactome" id="R-DME-5653890">
    <property type="pathway name" value="Lactose synthesis"/>
</dbReference>
<dbReference type="BioGRID-ORCS" id="38122">
    <property type="hits" value="0 hits in 3 CRISPR screens"/>
</dbReference>
<dbReference type="GenomeRNAi" id="38122"/>
<dbReference type="PRO" id="PR:P37161"/>
<dbReference type="Proteomes" id="UP000000803">
    <property type="component" value="Chromosome 3L"/>
</dbReference>
<dbReference type="Bgee" id="FBgn0004431">
    <property type="expression patterns" value="Expressed in copper cell (Drosophila) in digestive tract and 27 other cell types or tissues"/>
</dbReference>
<dbReference type="ExpressionAtlas" id="P37161">
    <property type="expression patterns" value="baseline and differential"/>
</dbReference>
<dbReference type="GO" id="GO:0005615">
    <property type="term" value="C:extracellular space"/>
    <property type="evidence" value="ECO:0000250"/>
    <property type="project" value="FlyBase"/>
</dbReference>
<dbReference type="GO" id="GO:0003796">
    <property type="term" value="F:lysozyme activity"/>
    <property type="evidence" value="ECO:0000250"/>
    <property type="project" value="FlyBase"/>
</dbReference>
<dbReference type="GO" id="GO:0050829">
    <property type="term" value="P:defense response to Gram-negative bacterium"/>
    <property type="evidence" value="ECO:0000250"/>
    <property type="project" value="FlyBase"/>
</dbReference>
<dbReference type="GO" id="GO:0031640">
    <property type="term" value="P:killing of cells of another organism"/>
    <property type="evidence" value="ECO:0007669"/>
    <property type="project" value="UniProtKB-KW"/>
</dbReference>
<dbReference type="CDD" id="cd16899">
    <property type="entry name" value="LYZ_C_invert"/>
    <property type="match status" value="1"/>
</dbReference>
<dbReference type="FunFam" id="1.10.530.10:FF:000001">
    <property type="entry name" value="Lysozyme C"/>
    <property type="match status" value="1"/>
</dbReference>
<dbReference type="Gene3D" id="1.10.530.10">
    <property type="match status" value="1"/>
</dbReference>
<dbReference type="InterPro" id="IPR001916">
    <property type="entry name" value="Glyco_hydro_22"/>
</dbReference>
<dbReference type="InterPro" id="IPR019799">
    <property type="entry name" value="Glyco_hydro_22_CS"/>
</dbReference>
<dbReference type="InterPro" id="IPR000974">
    <property type="entry name" value="Glyco_hydro_22_lys"/>
</dbReference>
<dbReference type="InterPro" id="IPR023346">
    <property type="entry name" value="Lysozyme-like_dom_sf"/>
</dbReference>
<dbReference type="PANTHER" id="PTHR11407:SF36">
    <property type="entry name" value="GEO02684P1-RELATED"/>
    <property type="match status" value="1"/>
</dbReference>
<dbReference type="PANTHER" id="PTHR11407">
    <property type="entry name" value="LYSOZYME C"/>
    <property type="match status" value="1"/>
</dbReference>
<dbReference type="Pfam" id="PF00062">
    <property type="entry name" value="Lys"/>
    <property type="match status" value="1"/>
</dbReference>
<dbReference type="PRINTS" id="PR00137">
    <property type="entry name" value="LYSOZYME"/>
</dbReference>
<dbReference type="PRINTS" id="PR00135">
    <property type="entry name" value="LYZLACT"/>
</dbReference>
<dbReference type="SMART" id="SM00263">
    <property type="entry name" value="LYZ1"/>
    <property type="match status" value="1"/>
</dbReference>
<dbReference type="SUPFAM" id="SSF53955">
    <property type="entry name" value="Lysozyme-like"/>
    <property type="match status" value="1"/>
</dbReference>
<dbReference type="PROSITE" id="PS00128">
    <property type="entry name" value="GLYCOSYL_HYDROL_F22_1"/>
    <property type="match status" value="1"/>
</dbReference>
<dbReference type="PROSITE" id="PS51348">
    <property type="entry name" value="GLYCOSYL_HYDROL_F22_2"/>
    <property type="match status" value="1"/>
</dbReference>
<accession>P37161</accession>
<accession>A4V9W9</accession>
<accession>A4V9X0</accession>
<accession>A4V9X1</accession>
<accession>A4V9X2</accession>
<accession>Q9W0K1</accession>